<keyword id="KW-0238">DNA-binding</keyword>
<keyword id="KW-0489">Methyltransferase</keyword>
<keyword id="KW-0680">Restriction system</keyword>
<keyword id="KW-0949">S-adenosyl-L-methionine</keyword>
<keyword id="KW-0808">Transferase</keyword>
<feature type="chain" id="PRO_0000087891" description="Type II methyltransferase M.HgiGI">
    <location>
        <begin position="1"/>
        <end position="126" status="greater than"/>
    </location>
</feature>
<feature type="domain" description="SAM-dependent MTase C5-type" evidence="1">
    <location>
        <begin position="1"/>
        <end position="126"/>
    </location>
</feature>
<feature type="active site" evidence="1 2">
    <location>
        <position position="75"/>
    </location>
</feature>
<feature type="non-terminal residue">
    <location>
        <position position="126"/>
    </location>
</feature>
<reference key="1">
    <citation type="submission" date="1990-11" db="EMBL/GenBank/DDBJ databases">
        <authorList>
            <person name="Duesterhoeft A."/>
            <person name="Kroeger M."/>
        </authorList>
    </citation>
    <scope>NUCLEOTIDE SEQUENCE [GENOMIC DNA]</scope>
    <source>
        <strain>HPA1</strain>
    </source>
</reference>
<reference key="2">
    <citation type="journal article" date="1995" name="Gene">
        <title>Organization and gene expression within restriction-modification systems of Herpetosiphon giganteus.</title>
        <authorList>
            <person name="Kroeger M."/>
            <person name="Blum E."/>
            <person name="Deppe E."/>
            <person name="Duesterhoeft A."/>
            <person name="Erdmann D."/>
            <person name="Kilz S."/>
            <person name="Meyer-Rogge S."/>
            <person name="Moestl D."/>
        </authorList>
    </citation>
    <scope>DISCUSSION OF SEQUENCE</scope>
</reference>
<reference key="3">
    <citation type="journal article" date="2003" name="Nucleic Acids Res.">
        <title>A nomenclature for restriction enzymes, DNA methyltransferases, homing endonucleases and their genes.</title>
        <authorList>
            <person name="Roberts R.J."/>
            <person name="Belfort M."/>
            <person name="Bestor T."/>
            <person name="Bhagwat A.S."/>
            <person name="Bickle T.A."/>
            <person name="Bitinaite J."/>
            <person name="Blumenthal R.M."/>
            <person name="Degtyarev S.K."/>
            <person name="Dryden D.T."/>
            <person name="Dybvig K."/>
            <person name="Firman K."/>
            <person name="Gromova E.S."/>
            <person name="Gumport R.I."/>
            <person name="Halford S.E."/>
            <person name="Hattman S."/>
            <person name="Heitman J."/>
            <person name="Hornby D.P."/>
            <person name="Janulaitis A."/>
            <person name="Jeltsch A."/>
            <person name="Josephsen J."/>
            <person name="Kiss A."/>
            <person name="Klaenhammer T.R."/>
            <person name="Kobayashi I."/>
            <person name="Kong H."/>
            <person name="Krueger D.H."/>
            <person name="Lacks S."/>
            <person name="Marinus M.G."/>
            <person name="Miyahara M."/>
            <person name="Morgan R.D."/>
            <person name="Murray N.E."/>
            <person name="Nagaraja V."/>
            <person name="Piekarowicz A."/>
            <person name="Pingoud A."/>
            <person name="Raleigh E."/>
            <person name="Rao D.N."/>
            <person name="Reich N."/>
            <person name="Repin V.E."/>
            <person name="Selker E.U."/>
            <person name="Shaw P.C."/>
            <person name="Stein D.C."/>
            <person name="Stoddard B.L."/>
            <person name="Szybalski W."/>
            <person name="Trautner T.A."/>
            <person name="Van Etten J.L."/>
            <person name="Vitor J.M."/>
            <person name="Wilson G.G."/>
            <person name="Xu S.Y."/>
        </authorList>
    </citation>
    <scope>NOMENCLATURE</scope>
</reference>
<gene>
    <name evidence="4" type="primary">hgiGIM</name>
</gene>
<comment type="function">
    <text evidence="3 5">A methylase, recognizes the double-stranded sequence 5'-GRCGYC-3', methylates C-? on both strands, and protects the DNA from cleavage by the HgiEI endonuclease.</text>
</comment>
<comment type="catalytic activity">
    <reaction evidence="2">
        <text>a 2'-deoxycytidine in DNA + S-adenosyl-L-methionine = a 5-methyl-2'-deoxycytidine in DNA + S-adenosyl-L-homocysteine + H(+)</text>
        <dbReference type="Rhea" id="RHEA:13681"/>
        <dbReference type="Rhea" id="RHEA-COMP:11369"/>
        <dbReference type="Rhea" id="RHEA-COMP:11370"/>
        <dbReference type="ChEBI" id="CHEBI:15378"/>
        <dbReference type="ChEBI" id="CHEBI:57856"/>
        <dbReference type="ChEBI" id="CHEBI:59789"/>
        <dbReference type="ChEBI" id="CHEBI:85452"/>
        <dbReference type="ChEBI" id="CHEBI:85454"/>
        <dbReference type="EC" id="2.1.1.37"/>
    </reaction>
</comment>
<comment type="similarity">
    <text evidence="1">Belongs to the class I-like SAM-binding methyltransferase superfamily. C5-methyltransferase family.</text>
</comment>
<proteinExistence type="inferred from homology"/>
<protein>
    <recommendedName>
        <fullName evidence="3">Type II methyltransferase M.HgiGI</fullName>
        <shortName evidence="3">M.HgiGI</shortName>
        <ecNumber>2.1.1.37</ecNumber>
    </recommendedName>
    <alternativeName>
        <fullName>Cytosine-specific methyltransferase HgiGI</fullName>
    </alternativeName>
    <alternativeName>
        <fullName>Modification methylase HgiGI</fullName>
    </alternativeName>
</protein>
<organism>
    <name type="scientific">Herpetosiphon aurantiacus</name>
    <name type="common">Herpetosiphon giganteus</name>
    <dbReference type="NCBI Taxonomy" id="65"/>
    <lineage>
        <taxon>Bacteria</taxon>
        <taxon>Bacillati</taxon>
        <taxon>Chloroflexota</taxon>
        <taxon>Chloroflexia</taxon>
        <taxon>Herpetosiphonales</taxon>
        <taxon>Herpetosiphonaceae</taxon>
        <taxon>Herpetosiphon</taxon>
    </lineage>
</organism>
<dbReference type="EC" id="2.1.1.37"/>
<dbReference type="EMBL" id="X55143">
    <property type="protein sequence ID" value="CAA38947.1"/>
    <property type="molecule type" value="Genomic_DNA"/>
</dbReference>
<dbReference type="PIR" id="S21955">
    <property type="entry name" value="S21955"/>
</dbReference>
<dbReference type="SMR" id="P25267"/>
<dbReference type="REBASE" id="3420">
    <property type="entry name" value="M.HgiGI"/>
</dbReference>
<dbReference type="GO" id="GO:0003886">
    <property type="term" value="F:DNA (cytosine-5-)-methyltransferase activity"/>
    <property type="evidence" value="ECO:0007669"/>
    <property type="project" value="UniProtKB-EC"/>
</dbReference>
<dbReference type="GO" id="GO:0003677">
    <property type="term" value="F:DNA binding"/>
    <property type="evidence" value="ECO:0007669"/>
    <property type="project" value="UniProtKB-KW"/>
</dbReference>
<dbReference type="GO" id="GO:0009307">
    <property type="term" value="P:DNA restriction-modification system"/>
    <property type="evidence" value="ECO:0007669"/>
    <property type="project" value="UniProtKB-KW"/>
</dbReference>
<dbReference type="GO" id="GO:0032259">
    <property type="term" value="P:methylation"/>
    <property type="evidence" value="ECO:0007669"/>
    <property type="project" value="UniProtKB-KW"/>
</dbReference>
<dbReference type="Gene3D" id="3.40.50.150">
    <property type="entry name" value="Vaccinia Virus protein VP39"/>
    <property type="match status" value="1"/>
</dbReference>
<dbReference type="InterPro" id="IPR050390">
    <property type="entry name" value="C5-Methyltransferase"/>
</dbReference>
<dbReference type="InterPro" id="IPR018117">
    <property type="entry name" value="C5_DNA_meth_AS"/>
</dbReference>
<dbReference type="InterPro" id="IPR001525">
    <property type="entry name" value="C5_MeTfrase"/>
</dbReference>
<dbReference type="InterPro" id="IPR029063">
    <property type="entry name" value="SAM-dependent_MTases_sf"/>
</dbReference>
<dbReference type="PANTHER" id="PTHR10629">
    <property type="entry name" value="CYTOSINE-SPECIFIC METHYLTRANSFERASE"/>
    <property type="match status" value="1"/>
</dbReference>
<dbReference type="PANTHER" id="PTHR10629:SF52">
    <property type="entry name" value="DNA (CYTOSINE-5)-METHYLTRANSFERASE 1"/>
    <property type="match status" value="1"/>
</dbReference>
<dbReference type="Pfam" id="PF00145">
    <property type="entry name" value="DNA_methylase"/>
    <property type="match status" value="1"/>
</dbReference>
<dbReference type="PRINTS" id="PR00105">
    <property type="entry name" value="C5METTRFRASE"/>
</dbReference>
<dbReference type="SUPFAM" id="SSF53335">
    <property type="entry name" value="S-adenosyl-L-methionine-dependent methyltransferases"/>
    <property type="match status" value="1"/>
</dbReference>
<dbReference type="PROSITE" id="PS00094">
    <property type="entry name" value="C5_MTASE_1"/>
    <property type="match status" value="1"/>
</dbReference>
<dbReference type="PROSITE" id="PS51679">
    <property type="entry name" value="SAM_MT_C5"/>
    <property type="match status" value="1"/>
</dbReference>
<sequence>MKTIDLFAGCGGMSLGFMQAGFEIVAAVDNWRPAITTYQQNFIHPIHELDLAEVDEAISLIKTYSPELIIGGPPCQDFSSAGKRDEGLGRANLTLDFVKIVLAIQPAWVIMENVERARLSKIHQQA</sequence>
<accession>P25267</accession>
<evidence type="ECO:0000255" key="1">
    <source>
        <dbReference type="PROSITE-ProRule" id="PRU01016"/>
    </source>
</evidence>
<evidence type="ECO:0000255" key="2">
    <source>
        <dbReference type="PROSITE-ProRule" id="PRU10018"/>
    </source>
</evidence>
<evidence type="ECO:0000303" key="3">
    <source>
    </source>
</evidence>
<evidence type="ECO:0000303" key="4">
    <source ref="1"/>
</evidence>
<evidence type="ECO:0000305" key="5">
    <source>
    </source>
</evidence>
<name>MTG1_HERAU</name>